<dbReference type="EMBL" id="AK077347">
    <property type="protein sequence ID" value="BAC36762.1"/>
    <property type="molecule type" value="mRNA"/>
</dbReference>
<dbReference type="EMBL" id="BC027559">
    <property type="protein sequence ID" value="AAH27559.1"/>
    <property type="molecule type" value="mRNA"/>
</dbReference>
<dbReference type="CCDS" id="CCDS29862.1">
    <molecule id="Q8BPA8-1"/>
</dbReference>
<dbReference type="RefSeq" id="NP_766227.1">
    <molecule id="Q8BPA8-1"/>
    <property type="nucleotide sequence ID" value="NM_172639.3"/>
</dbReference>
<dbReference type="BioGRID" id="230484">
    <property type="interactions" value="10"/>
</dbReference>
<dbReference type="FunCoup" id="Q8BPA8">
    <property type="interactions" value="1752"/>
</dbReference>
<dbReference type="IntAct" id="Q8BPA8">
    <property type="interactions" value="3"/>
</dbReference>
<dbReference type="MINT" id="Q8BPA8"/>
<dbReference type="STRING" id="10090.ENSMUSP00000045683"/>
<dbReference type="iPTMnet" id="Q8BPA8"/>
<dbReference type="PhosphoSitePlus" id="Q8BPA8"/>
<dbReference type="PaxDb" id="10090-ENSMUSP00000045683"/>
<dbReference type="PeptideAtlas" id="Q8BPA8"/>
<dbReference type="ProteomicsDB" id="279762">
    <molecule id="Q8BPA8-1"/>
</dbReference>
<dbReference type="ProteomicsDB" id="279763">
    <molecule id="Q8BPA8-2"/>
</dbReference>
<dbReference type="Pumba" id="Q8BPA8"/>
<dbReference type="Antibodypedia" id="31286">
    <property type="antibodies" value="182 antibodies from 22 providers"/>
</dbReference>
<dbReference type="DNASU" id="226162"/>
<dbReference type="Ensembl" id="ENSMUST00000047057.9">
    <molecule id="Q8BPA8-1"/>
    <property type="protein sequence ID" value="ENSMUSP00000045683.8"/>
    <property type="gene ID" value="ENSMUSG00000041035.10"/>
</dbReference>
<dbReference type="GeneID" id="226162"/>
<dbReference type="KEGG" id="mmu:226162"/>
<dbReference type="UCSC" id="uc008hrd.1">
    <molecule id="Q8BPA8-1"/>
    <property type="organism name" value="mouse"/>
</dbReference>
<dbReference type="AGR" id="MGI:1924407"/>
<dbReference type="CTD" id="25911"/>
<dbReference type="MGI" id="MGI:1924407">
    <property type="gene designation" value="Dpcd"/>
</dbReference>
<dbReference type="VEuPathDB" id="HostDB:ENSMUSG00000041035"/>
<dbReference type="eggNOG" id="ENOG502QUNA">
    <property type="taxonomic scope" value="Eukaryota"/>
</dbReference>
<dbReference type="GeneTree" id="ENSGT00390000014031"/>
<dbReference type="HOGENOM" id="CLU_097313_0_0_1"/>
<dbReference type="InParanoid" id="Q8BPA8"/>
<dbReference type="OMA" id="PILCEME"/>
<dbReference type="OrthoDB" id="10256139at2759"/>
<dbReference type="PhylomeDB" id="Q8BPA8"/>
<dbReference type="TreeFam" id="TF324098"/>
<dbReference type="BioGRID-ORCS" id="226162">
    <property type="hits" value="1 hit in 76 CRISPR screens"/>
</dbReference>
<dbReference type="ChiTaRS" id="Dpcd">
    <property type="organism name" value="mouse"/>
</dbReference>
<dbReference type="PRO" id="PR:Q8BPA8"/>
<dbReference type="Proteomes" id="UP000000589">
    <property type="component" value="Chromosome 19"/>
</dbReference>
<dbReference type="RNAct" id="Q8BPA8">
    <property type="molecule type" value="protein"/>
</dbReference>
<dbReference type="Bgee" id="ENSMUSG00000041035">
    <property type="expression patterns" value="Expressed in choroid plexus epithelium and 265 other cell types or tissues"/>
</dbReference>
<dbReference type="ExpressionAtlas" id="Q8BPA8">
    <property type="expression patterns" value="baseline and differential"/>
</dbReference>
<dbReference type="GO" id="GO:0005576">
    <property type="term" value="C:extracellular region"/>
    <property type="evidence" value="ECO:0007669"/>
    <property type="project" value="GOC"/>
</dbReference>
<dbReference type="GO" id="GO:0007368">
    <property type="term" value="P:determination of left/right symmetry"/>
    <property type="evidence" value="ECO:0000315"/>
    <property type="project" value="MGI"/>
</dbReference>
<dbReference type="GO" id="GO:0003351">
    <property type="term" value="P:epithelial cilium movement involved in extracellular fluid movement"/>
    <property type="evidence" value="ECO:0000315"/>
    <property type="project" value="MGI"/>
</dbReference>
<dbReference type="GO" id="GO:0051649">
    <property type="term" value="P:establishment of localization in cell"/>
    <property type="evidence" value="ECO:0000315"/>
    <property type="project" value="MGI"/>
</dbReference>
<dbReference type="GO" id="GO:0030317">
    <property type="term" value="P:flagellated sperm motility"/>
    <property type="evidence" value="ECO:0000315"/>
    <property type="project" value="MGI"/>
</dbReference>
<dbReference type="GO" id="GO:0021670">
    <property type="term" value="P:lateral ventricle development"/>
    <property type="evidence" value="ECO:0000315"/>
    <property type="project" value="MGI"/>
</dbReference>
<dbReference type="GO" id="GO:0060972">
    <property type="term" value="P:left/right pattern formation"/>
    <property type="evidence" value="ECO:0000315"/>
    <property type="project" value="MGI"/>
</dbReference>
<dbReference type="GO" id="GO:0007283">
    <property type="term" value="P:spermatogenesis"/>
    <property type="evidence" value="ECO:0000315"/>
    <property type="project" value="MGI"/>
</dbReference>
<dbReference type="GO" id="GO:0021678">
    <property type="term" value="P:third ventricle development"/>
    <property type="evidence" value="ECO:0000315"/>
    <property type="project" value="MGI"/>
</dbReference>
<dbReference type="GO" id="GO:0021591">
    <property type="term" value="P:ventricular system development"/>
    <property type="evidence" value="ECO:0000315"/>
    <property type="project" value="MGI"/>
</dbReference>
<dbReference type="InterPro" id="IPR026224">
    <property type="entry name" value="DPCD"/>
</dbReference>
<dbReference type="PANTHER" id="PTHR31921">
    <property type="entry name" value="PROTEIN DPCD"/>
    <property type="match status" value="1"/>
</dbReference>
<dbReference type="PANTHER" id="PTHR31921:SF1">
    <property type="entry name" value="PROTEIN DPCD"/>
    <property type="match status" value="1"/>
</dbReference>
<dbReference type="Pfam" id="PF14913">
    <property type="entry name" value="DPCD"/>
    <property type="match status" value="1"/>
</dbReference>
<dbReference type="PRINTS" id="PR02065">
    <property type="entry name" value="PROTEINDPCD"/>
</dbReference>
<comment type="function">
    <text evidence="1">May play a role in the formation or function of ciliated cells.</text>
</comment>
<comment type="interaction">
    <interactant intactId="EBI-26898155">
        <id>Q8BPA8</id>
    </interactant>
    <interactant intactId="EBI-352939">
        <id>Q9Y230</id>
        <label>RUVBL2</label>
    </interactant>
    <organismsDiffer>true</organismsDiffer>
    <experiments>2</experiments>
</comment>
<comment type="alternative products">
    <event type="alternative splicing"/>
    <isoform>
        <id>Q8BPA8-1</id>
        <name>1</name>
        <sequence type="displayed"/>
    </isoform>
    <isoform>
        <id>Q8BPA8-2</id>
        <name>2</name>
        <sequence type="described" ref="VSP_032081 VSP_032082"/>
    </isoform>
</comment>
<comment type="similarity">
    <text evidence="3">Belongs to the DPCD family.</text>
</comment>
<accession>Q8BPA8</accession>
<accession>Q8K1L8</accession>
<organism>
    <name type="scientific">Mus musculus</name>
    <name type="common">Mouse</name>
    <dbReference type="NCBI Taxonomy" id="10090"/>
    <lineage>
        <taxon>Eukaryota</taxon>
        <taxon>Metazoa</taxon>
        <taxon>Chordata</taxon>
        <taxon>Craniata</taxon>
        <taxon>Vertebrata</taxon>
        <taxon>Euteleostomi</taxon>
        <taxon>Mammalia</taxon>
        <taxon>Eutheria</taxon>
        <taxon>Euarchontoglires</taxon>
        <taxon>Glires</taxon>
        <taxon>Rodentia</taxon>
        <taxon>Myomorpha</taxon>
        <taxon>Muroidea</taxon>
        <taxon>Muridae</taxon>
        <taxon>Murinae</taxon>
        <taxon>Mus</taxon>
        <taxon>Mus</taxon>
    </lineage>
</organism>
<evidence type="ECO:0000250" key="1"/>
<evidence type="ECO:0000303" key="2">
    <source>
    </source>
</evidence>
<evidence type="ECO:0000305" key="3"/>
<proteinExistence type="evidence at protein level"/>
<name>DPCD_MOUSE</name>
<sequence>MAVTSWLEVLRSAEKTALLQDGKRMVHYLFPDGKEMAEEYDEKTSELLVRKWRVKNALGALGQWQLEVGEPVPSGAGSLGSELIKESNANPIFMRKDTKTSFQWRIRNLPYPKDVYSVSVAQKERCVIVRTTNKKYYKKFSIPDLDRHQLPLEDSALSFAHANCTLIISYQKPKEVMAAESELQKELKKVKTAHGSAGDCKTQ</sequence>
<feature type="chain" id="PRO_0000323724" description="Protein DPCD">
    <location>
        <begin position="1"/>
        <end position="203"/>
    </location>
</feature>
<feature type="splice variant" id="VSP_032081" description="In isoform 2." evidence="2">
    <original>SNANPIFMRKDTKTSFQWRIRNLPYP</original>
    <variation>THLHAQGHQNKFPVADSKSPLPEGCV</variation>
    <location>
        <begin position="87"/>
        <end position="112"/>
    </location>
</feature>
<feature type="splice variant" id="VSP_032082" description="In isoform 2." evidence="2">
    <location>
        <begin position="113"/>
        <end position="203"/>
    </location>
</feature>
<reference key="1">
    <citation type="journal article" date="2005" name="Science">
        <title>The transcriptional landscape of the mammalian genome.</title>
        <authorList>
            <person name="Carninci P."/>
            <person name="Kasukawa T."/>
            <person name="Katayama S."/>
            <person name="Gough J."/>
            <person name="Frith M.C."/>
            <person name="Maeda N."/>
            <person name="Oyama R."/>
            <person name="Ravasi T."/>
            <person name="Lenhard B."/>
            <person name="Wells C."/>
            <person name="Kodzius R."/>
            <person name="Shimokawa K."/>
            <person name="Bajic V.B."/>
            <person name="Brenner S.E."/>
            <person name="Batalov S."/>
            <person name="Forrest A.R."/>
            <person name="Zavolan M."/>
            <person name="Davis M.J."/>
            <person name="Wilming L.G."/>
            <person name="Aidinis V."/>
            <person name="Allen J.E."/>
            <person name="Ambesi-Impiombato A."/>
            <person name="Apweiler R."/>
            <person name="Aturaliya R.N."/>
            <person name="Bailey T.L."/>
            <person name="Bansal M."/>
            <person name="Baxter L."/>
            <person name="Beisel K.W."/>
            <person name="Bersano T."/>
            <person name="Bono H."/>
            <person name="Chalk A.M."/>
            <person name="Chiu K.P."/>
            <person name="Choudhary V."/>
            <person name="Christoffels A."/>
            <person name="Clutterbuck D.R."/>
            <person name="Crowe M.L."/>
            <person name="Dalla E."/>
            <person name="Dalrymple B.P."/>
            <person name="de Bono B."/>
            <person name="Della Gatta G."/>
            <person name="di Bernardo D."/>
            <person name="Down T."/>
            <person name="Engstrom P."/>
            <person name="Fagiolini M."/>
            <person name="Faulkner G."/>
            <person name="Fletcher C.F."/>
            <person name="Fukushima T."/>
            <person name="Furuno M."/>
            <person name="Futaki S."/>
            <person name="Gariboldi M."/>
            <person name="Georgii-Hemming P."/>
            <person name="Gingeras T.R."/>
            <person name="Gojobori T."/>
            <person name="Green R.E."/>
            <person name="Gustincich S."/>
            <person name="Harbers M."/>
            <person name="Hayashi Y."/>
            <person name="Hensch T.K."/>
            <person name="Hirokawa N."/>
            <person name="Hill D."/>
            <person name="Huminiecki L."/>
            <person name="Iacono M."/>
            <person name="Ikeo K."/>
            <person name="Iwama A."/>
            <person name="Ishikawa T."/>
            <person name="Jakt M."/>
            <person name="Kanapin A."/>
            <person name="Katoh M."/>
            <person name="Kawasawa Y."/>
            <person name="Kelso J."/>
            <person name="Kitamura H."/>
            <person name="Kitano H."/>
            <person name="Kollias G."/>
            <person name="Krishnan S.P."/>
            <person name="Kruger A."/>
            <person name="Kummerfeld S.K."/>
            <person name="Kurochkin I.V."/>
            <person name="Lareau L.F."/>
            <person name="Lazarevic D."/>
            <person name="Lipovich L."/>
            <person name="Liu J."/>
            <person name="Liuni S."/>
            <person name="McWilliam S."/>
            <person name="Madan Babu M."/>
            <person name="Madera M."/>
            <person name="Marchionni L."/>
            <person name="Matsuda H."/>
            <person name="Matsuzawa S."/>
            <person name="Miki H."/>
            <person name="Mignone F."/>
            <person name="Miyake S."/>
            <person name="Morris K."/>
            <person name="Mottagui-Tabar S."/>
            <person name="Mulder N."/>
            <person name="Nakano N."/>
            <person name="Nakauchi H."/>
            <person name="Ng P."/>
            <person name="Nilsson R."/>
            <person name="Nishiguchi S."/>
            <person name="Nishikawa S."/>
            <person name="Nori F."/>
            <person name="Ohara O."/>
            <person name="Okazaki Y."/>
            <person name="Orlando V."/>
            <person name="Pang K.C."/>
            <person name="Pavan W.J."/>
            <person name="Pavesi G."/>
            <person name="Pesole G."/>
            <person name="Petrovsky N."/>
            <person name="Piazza S."/>
            <person name="Reed J."/>
            <person name="Reid J.F."/>
            <person name="Ring B.Z."/>
            <person name="Ringwald M."/>
            <person name="Rost B."/>
            <person name="Ruan Y."/>
            <person name="Salzberg S.L."/>
            <person name="Sandelin A."/>
            <person name="Schneider C."/>
            <person name="Schoenbach C."/>
            <person name="Sekiguchi K."/>
            <person name="Semple C.A."/>
            <person name="Seno S."/>
            <person name="Sessa L."/>
            <person name="Sheng Y."/>
            <person name="Shibata Y."/>
            <person name="Shimada H."/>
            <person name="Shimada K."/>
            <person name="Silva D."/>
            <person name="Sinclair B."/>
            <person name="Sperling S."/>
            <person name="Stupka E."/>
            <person name="Sugiura K."/>
            <person name="Sultana R."/>
            <person name="Takenaka Y."/>
            <person name="Taki K."/>
            <person name="Tammoja K."/>
            <person name="Tan S.L."/>
            <person name="Tang S."/>
            <person name="Taylor M.S."/>
            <person name="Tegner J."/>
            <person name="Teichmann S.A."/>
            <person name="Ueda H.R."/>
            <person name="van Nimwegen E."/>
            <person name="Verardo R."/>
            <person name="Wei C.L."/>
            <person name="Yagi K."/>
            <person name="Yamanishi H."/>
            <person name="Zabarovsky E."/>
            <person name="Zhu S."/>
            <person name="Zimmer A."/>
            <person name="Hide W."/>
            <person name="Bult C."/>
            <person name="Grimmond S.M."/>
            <person name="Teasdale R.D."/>
            <person name="Liu E.T."/>
            <person name="Brusic V."/>
            <person name="Quackenbush J."/>
            <person name="Wahlestedt C."/>
            <person name="Mattick J.S."/>
            <person name="Hume D.A."/>
            <person name="Kai C."/>
            <person name="Sasaki D."/>
            <person name="Tomaru Y."/>
            <person name="Fukuda S."/>
            <person name="Kanamori-Katayama M."/>
            <person name="Suzuki M."/>
            <person name="Aoki J."/>
            <person name="Arakawa T."/>
            <person name="Iida J."/>
            <person name="Imamura K."/>
            <person name="Itoh M."/>
            <person name="Kato T."/>
            <person name="Kawaji H."/>
            <person name="Kawagashira N."/>
            <person name="Kawashima T."/>
            <person name="Kojima M."/>
            <person name="Kondo S."/>
            <person name="Konno H."/>
            <person name="Nakano K."/>
            <person name="Ninomiya N."/>
            <person name="Nishio T."/>
            <person name="Okada M."/>
            <person name="Plessy C."/>
            <person name="Shibata K."/>
            <person name="Shiraki T."/>
            <person name="Suzuki S."/>
            <person name="Tagami M."/>
            <person name="Waki K."/>
            <person name="Watahiki A."/>
            <person name="Okamura-Oho Y."/>
            <person name="Suzuki H."/>
            <person name="Kawai J."/>
            <person name="Hayashizaki Y."/>
        </authorList>
    </citation>
    <scope>NUCLEOTIDE SEQUENCE [LARGE SCALE MRNA] (ISOFORM 1)</scope>
    <source>
        <strain>C57BL/6J</strain>
        <tissue>Pituitary</tissue>
    </source>
</reference>
<reference key="2">
    <citation type="journal article" date="2004" name="Genome Res.">
        <title>The status, quality, and expansion of the NIH full-length cDNA project: the Mammalian Gene Collection (MGC).</title>
        <authorList>
            <consortium name="The MGC Project Team"/>
        </authorList>
    </citation>
    <scope>NUCLEOTIDE SEQUENCE [LARGE SCALE MRNA] (ISOFORM 2)</scope>
    <source>
        <strain>C57BL/6J</strain>
        <tissue>Mammary gland</tissue>
    </source>
</reference>
<reference key="3">
    <citation type="journal article" date="2010" name="Cell">
        <title>A tissue-specific atlas of mouse protein phosphorylation and expression.</title>
        <authorList>
            <person name="Huttlin E.L."/>
            <person name="Jedrychowski M.P."/>
            <person name="Elias J.E."/>
            <person name="Goswami T."/>
            <person name="Rad R."/>
            <person name="Beausoleil S.A."/>
            <person name="Villen J."/>
            <person name="Haas W."/>
            <person name="Sowa M.E."/>
            <person name="Gygi S.P."/>
        </authorList>
    </citation>
    <scope>IDENTIFICATION BY MASS SPECTROMETRY [LARGE SCALE ANALYSIS]</scope>
    <source>
        <tissue>Kidney</tissue>
        <tissue>Spleen</tissue>
        <tissue>Testis</tissue>
    </source>
</reference>
<keyword id="KW-0025">Alternative splicing</keyword>
<keyword id="KW-1185">Reference proteome</keyword>
<protein>
    <recommendedName>
        <fullName>Protein DPCD</fullName>
    </recommendedName>
</protein>
<gene>
    <name type="primary">Dpcd</name>
</gene>